<reference key="1">
    <citation type="journal article" date="2006" name="BMC Genomics">
        <title>Complete genome sequence of Shigella flexneri 5b and comparison with Shigella flexneri 2a.</title>
        <authorList>
            <person name="Nie H."/>
            <person name="Yang F."/>
            <person name="Zhang X."/>
            <person name="Yang J."/>
            <person name="Chen L."/>
            <person name="Wang J."/>
            <person name="Xiong Z."/>
            <person name="Peng J."/>
            <person name="Sun L."/>
            <person name="Dong J."/>
            <person name="Xue Y."/>
            <person name="Xu X."/>
            <person name="Chen S."/>
            <person name="Yao Z."/>
            <person name="Shen Y."/>
            <person name="Jin Q."/>
        </authorList>
    </citation>
    <scope>NUCLEOTIDE SEQUENCE [LARGE SCALE GENOMIC DNA]</scope>
    <source>
        <strain>8401</strain>
    </source>
</reference>
<accession>Q0T686</accession>
<proteinExistence type="inferred from homology"/>
<feature type="chain" id="PRO_0000366840" description="Ribosomal RNA large subunit methyltransferase K/L">
    <location>
        <begin position="1"/>
        <end position="702"/>
    </location>
</feature>
<feature type="domain" description="THUMP" evidence="1">
    <location>
        <begin position="43"/>
        <end position="154"/>
    </location>
</feature>
<dbReference type="EC" id="2.1.1.173" evidence="1"/>
<dbReference type="EC" id="2.1.1.264" evidence="1"/>
<dbReference type="EMBL" id="CP000266">
    <property type="protein sequence ID" value="ABF03179.1"/>
    <property type="molecule type" value="Genomic_DNA"/>
</dbReference>
<dbReference type="SMR" id="Q0T686"/>
<dbReference type="KEGG" id="sfv:SFV_0957"/>
<dbReference type="HOGENOM" id="CLU_014042_2_0_6"/>
<dbReference type="Proteomes" id="UP000000659">
    <property type="component" value="Chromosome"/>
</dbReference>
<dbReference type="GO" id="GO:0005737">
    <property type="term" value="C:cytoplasm"/>
    <property type="evidence" value="ECO:0007669"/>
    <property type="project" value="UniProtKB-SubCell"/>
</dbReference>
<dbReference type="GO" id="GO:0052915">
    <property type="term" value="F:23S rRNA (guanine(2445)-N(2))-methyltransferase activity"/>
    <property type="evidence" value="ECO:0007669"/>
    <property type="project" value="UniProtKB-UniRule"/>
</dbReference>
<dbReference type="GO" id="GO:0003723">
    <property type="term" value="F:RNA binding"/>
    <property type="evidence" value="ECO:0007669"/>
    <property type="project" value="UniProtKB-KW"/>
</dbReference>
<dbReference type="GO" id="GO:0070043">
    <property type="term" value="F:rRNA (guanine-N7-)-methyltransferase activity"/>
    <property type="evidence" value="ECO:0007669"/>
    <property type="project" value="UniProtKB-UniRule"/>
</dbReference>
<dbReference type="CDD" id="cd02440">
    <property type="entry name" value="AdoMet_MTases"/>
    <property type="match status" value="1"/>
</dbReference>
<dbReference type="CDD" id="cd11715">
    <property type="entry name" value="THUMP_AdoMetMT"/>
    <property type="match status" value="1"/>
</dbReference>
<dbReference type="FunFam" id="3.30.750.80:FF:000001">
    <property type="entry name" value="Ribosomal RNA large subunit methyltransferase K/L"/>
    <property type="match status" value="1"/>
</dbReference>
<dbReference type="FunFam" id="3.40.50.150:FF:000039">
    <property type="entry name" value="Ribosomal RNA large subunit methyltransferase K/L"/>
    <property type="match status" value="1"/>
</dbReference>
<dbReference type="Gene3D" id="3.30.2130.30">
    <property type="match status" value="1"/>
</dbReference>
<dbReference type="Gene3D" id="3.30.750.80">
    <property type="entry name" value="RNA methyltransferase domain (HRMD) like"/>
    <property type="match status" value="1"/>
</dbReference>
<dbReference type="Gene3D" id="3.40.50.150">
    <property type="entry name" value="Vaccinia Virus protein VP39"/>
    <property type="match status" value="2"/>
</dbReference>
<dbReference type="HAMAP" id="MF_01858">
    <property type="entry name" value="23SrRNA_methyltr_KL"/>
    <property type="match status" value="1"/>
</dbReference>
<dbReference type="InterPro" id="IPR017244">
    <property type="entry name" value="23SrRNA_methyltr_KL"/>
</dbReference>
<dbReference type="InterPro" id="IPR002052">
    <property type="entry name" value="DNA_methylase_N6_adenine_CS"/>
</dbReference>
<dbReference type="InterPro" id="IPR000241">
    <property type="entry name" value="RlmKL-like_Mtase"/>
</dbReference>
<dbReference type="InterPro" id="IPR053943">
    <property type="entry name" value="RlmKL-like_Mtase_CS"/>
</dbReference>
<dbReference type="InterPro" id="IPR054170">
    <property type="entry name" value="RlmL_1st"/>
</dbReference>
<dbReference type="InterPro" id="IPR019614">
    <property type="entry name" value="SAM-dep_methyl-trfase"/>
</dbReference>
<dbReference type="InterPro" id="IPR029063">
    <property type="entry name" value="SAM-dependent_MTases_sf"/>
</dbReference>
<dbReference type="InterPro" id="IPR004114">
    <property type="entry name" value="THUMP_dom"/>
</dbReference>
<dbReference type="NCBIfam" id="NF008748">
    <property type="entry name" value="PRK11783.1"/>
    <property type="match status" value="1"/>
</dbReference>
<dbReference type="PANTHER" id="PTHR47313">
    <property type="entry name" value="RIBOSOMAL RNA LARGE SUBUNIT METHYLTRANSFERASE K/L"/>
    <property type="match status" value="1"/>
</dbReference>
<dbReference type="PANTHER" id="PTHR47313:SF1">
    <property type="entry name" value="RIBOSOMAL RNA LARGE SUBUNIT METHYLTRANSFERASE K_L"/>
    <property type="match status" value="1"/>
</dbReference>
<dbReference type="Pfam" id="PF10672">
    <property type="entry name" value="Methyltrans_SAM"/>
    <property type="match status" value="1"/>
</dbReference>
<dbReference type="Pfam" id="PF22020">
    <property type="entry name" value="RlmL_1st"/>
    <property type="match status" value="1"/>
</dbReference>
<dbReference type="Pfam" id="PF02926">
    <property type="entry name" value="THUMP"/>
    <property type="match status" value="1"/>
</dbReference>
<dbReference type="Pfam" id="PF01170">
    <property type="entry name" value="UPF0020"/>
    <property type="match status" value="1"/>
</dbReference>
<dbReference type="PIRSF" id="PIRSF037618">
    <property type="entry name" value="RNA_Mtase_bacteria_prd"/>
    <property type="match status" value="1"/>
</dbReference>
<dbReference type="PRINTS" id="PR00507">
    <property type="entry name" value="N12N6MTFRASE"/>
</dbReference>
<dbReference type="SMART" id="SM00981">
    <property type="entry name" value="THUMP"/>
    <property type="match status" value="1"/>
</dbReference>
<dbReference type="SUPFAM" id="SSF53335">
    <property type="entry name" value="S-adenosyl-L-methionine-dependent methyltransferases"/>
    <property type="match status" value="2"/>
</dbReference>
<dbReference type="PROSITE" id="PS51165">
    <property type="entry name" value="THUMP"/>
    <property type="match status" value="1"/>
</dbReference>
<dbReference type="PROSITE" id="PS01261">
    <property type="entry name" value="UPF0020"/>
    <property type="match status" value="1"/>
</dbReference>
<name>RLMKL_SHIF8</name>
<organism>
    <name type="scientific">Shigella flexneri serotype 5b (strain 8401)</name>
    <dbReference type="NCBI Taxonomy" id="373384"/>
    <lineage>
        <taxon>Bacteria</taxon>
        <taxon>Pseudomonadati</taxon>
        <taxon>Pseudomonadota</taxon>
        <taxon>Gammaproteobacteria</taxon>
        <taxon>Enterobacterales</taxon>
        <taxon>Enterobacteriaceae</taxon>
        <taxon>Shigella</taxon>
    </lineage>
</organism>
<protein>
    <recommendedName>
        <fullName evidence="1">Ribosomal RNA large subunit methyltransferase K/L</fullName>
    </recommendedName>
    <domain>
        <recommendedName>
            <fullName evidence="1">23S rRNA m2G2445 methyltransferase</fullName>
            <ecNumber evidence="1">2.1.1.173</ecNumber>
        </recommendedName>
        <alternativeName>
            <fullName evidence="1">rRNA (guanine-N(2)-)-methyltransferase RlmL</fullName>
        </alternativeName>
    </domain>
    <domain>
        <recommendedName>
            <fullName evidence="1">23S rRNA m7G2069 methyltransferase</fullName>
            <ecNumber evidence="1">2.1.1.264</ecNumber>
        </recommendedName>
        <alternativeName>
            <fullName evidence="1">rRNA (guanine-N(7)-)-methyltransferase RlmK</fullName>
        </alternativeName>
    </domain>
</protein>
<comment type="function">
    <text evidence="1">Specifically methylates the guanine in position 2445 (m2G2445) and the guanine in position 2069 (m7G2069) of 23S rRNA.</text>
</comment>
<comment type="catalytic activity">
    <reaction evidence="1">
        <text>guanosine(2445) in 23S rRNA + S-adenosyl-L-methionine = N(2)-methylguanosine(2445) in 23S rRNA + S-adenosyl-L-homocysteine + H(+)</text>
        <dbReference type="Rhea" id="RHEA:42740"/>
        <dbReference type="Rhea" id="RHEA-COMP:10215"/>
        <dbReference type="Rhea" id="RHEA-COMP:10216"/>
        <dbReference type="ChEBI" id="CHEBI:15378"/>
        <dbReference type="ChEBI" id="CHEBI:57856"/>
        <dbReference type="ChEBI" id="CHEBI:59789"/>
        <dbReference type="ChEBI" id="CHEBI:74269"/>
        <dbReference type="ChEBI" id="CHEBI:74481"/>
        <dbReference type="EC" id="2.1.1.173"/>
    </reaction>
</comment>
<comment type="catalytic activity">
    <reaction evidence="1">
        <text>guanosine(2069) in 23S rRNA + S-adenosyl-L-methionine = N(2)-methylguanosine(2069) in 23S rRNA + S-adenosyl-L-homocysteine + H(+)</text>
        <dbReference type="Rhea" id="RHEA:43772"/>
        <dbReference type="Rhea" id="RHEA-COMP:10688"/>
        <dbReference type="Rhea" id="RHEA-COMP:10689"/>
        <dbReference type="ChEBI" id="CHEBI:15378"/>
        <dbReference type="ChEBI" id="CHEBI:57856"/>
        <dbReference type="ChEBI" id="CHEBI:59789"/>
        <dbReference type="ChEBI" id="CHEBI:74269"/>
        <dbReference type="ChEBI" id="CHEBI:74481"/>
        <dbReference type="EC" id="2.1.1.264"/>
    </reaction>
</comment>
<comment type="subcellular location">
    <subcellularLocation>
        <location evidence="1">Cytoplasm</location>
    </subcellularLocation>
</comment>
<comment type="similarity">
    <text evidence="1">Belongs to the methyltransferase superfamily. RlmKL family.</text>
</comment>
<gene>
    <name evidence="1" type="primary">rlmL</name>
    <name type="ordered locus">SFV_0957</name>
</gene>
<sequence>MNSLFASTARGLEELLKTELENLGAVECQVVQGGVHFKGDTRLVYQSLMWSRLASRIMLPLGECKVYSDLDLYLGVQAINWTEMFNPGATFAVHFSGLNDTIRNSQYGAMKVKDAIVDAFTRKNLPRPNVDRDAPDIRVNVWLHKETASIALDLSGDGLHLRGYRDRAGIAPIKETLAAAIVMRSGWQSGTPLLDPMCGSGTLLIEAAMLATDRAPGLHRGRWGFSGWAQHDEAIWQEVKAEAQTRARKGLAEYSSHFYGSDSDARVIQRARTNARLAGIGELITFEVKDVAQLTNPLPKGPYGTVLSNPPYGERLDSEPALIALHSLLGRIMKNQFGGWNLSLFSASPDLLSCLQLRADKQYKAKNGPLDCVQKNYHVAESTPDSKPAMVAEDYANRLRKNLKKFEKWARQEGIECYRLYDADLPEYNVAVDRYADWVVVQEYAPPKTIDAHKARQRLFDIIAATISVLGIAPNKLVLKTRERHKGKNQYQKLGEKGEFLEVTEYNAHLWVNLTDYLDTGLFLDHRIARRMLGQMSKGKDFLNLFSYTGSATVHAGLGGARSTTTVDMSRTYLEWAERNLRLNGLTRRAHRLIQADCLAWLREANEQFDLIFIDPPTFSNSKRMEDAFDVQRDHLALMKDLKRLLRAGGTIMFSNNKRGFRMDLDGLAKLGLKAQEITQKTLSQDFARNRQIHNCWLITAA</sequence>
<evidence type="ECO:0000255" key="1">
    <source>
        <dbReference type="HAMAP-Rule" id="MF_01858"/>
    </source>
</evidence>
<keyword id="KW-0963">Cytoplasm</keyword>
<keyword id="KW-0489">Methyltransferase</keyword>
<keyword id="KW-0694">RNA-binding</keyword>
<keyword id="KW-0698">rRNA processing</keyword>
<keyword id="KW-0949">S-adenosyl-L-methionine</keyword>
<keyword id="KW-0808">Transferase</keyword>